<gene>
    <name evidence="1" type="primary">glyA</name>
    <name type="ordered locus">ECH74115_3784</name>
</gene>
<evidence type="ECO:0000255" key="1">
    <source>
        <dbReference type="HAMAP-Rule" id="MF_00051"/>
    </source>
</evidence>
<reference key="1">
    <citation type="journal article" date="2011" name="Proc. Natl. Acad. Sci. U.S.A.">
        <title>Genomic anatomy of Escherichia coli O157:H7 outbreaks.</title>
        <authorList>
            <person name="Eppinger M."/>
            <person name="Mammel M.K."/>
            <person name="Leclerc J.E."/>
            <person name="Ravel J."/>
            <person name="Cebula T.A."/>
        </authorList>
    </citation>
    <scope>NUCLEOTIDE SEQUENCE [LARGE SCALE GENOMIC DNA]</scope>
    <source>
        <strain>EC4115 / EHEC</strain>
    </source>
</reference>
<protein>
    <recommendedName>
        <fullName evidence="1">Serine hydroxymethyltransferase</fullName>
        <shortName evidence="1">SHMT</shortName>
        <shortName evidence="1">Serine methylase</shortName>
        <ecNumber evidence="1">2.1.2.1</ecNumber>
    </recommendedName>
</protein>
<keyword id="KW-0007">Acetylation</keyword>
<keyword id="KW-0028">Amino-acid biosynthesis</keyword>
<keyword id="KW-0963">Cytoplasm</keyword>
<keyword id="KW-0554">One-carbon metabolism</keyword>
<keyword id="KW-0663">Pyridoxal phosphate</keyword>
<keyword id="KW-0808">Transferase</keyword>
<accession>B5Z123</accession>
<name>GLYA_ECO5E</name>
<feature type="chain" id="PRO_1000091538" description="Serine hydroxymethyltransferase">
    <location>
        <begin position="1"/>
        <end position="417"/>
    </location>
</feature>
<feature type="binding site" evidence="1">
    <location>
        <position position="121"/>
    </location>
    <ligand>
        <name>(6S)-5,6,7,8-tetrahydrofolate</name>
        <dbReference type="ChEBI" id="CHEBI:57453"/>
    </ligand>
</feature>
<feature type="binding site" evidence="1">
    <location>
        <begin position="125"/>
        <end position="127"/>
    </location>
    <ligand>
        <name>(6S)-5,6,7,8-tetrahydrofolate</name>
        <dbReference type="ChEBI" id="CHEBI:57453"/>
    </ligand>
</feature>
<feature type="binding site" evidence="1">
    <location>
        <begin position="355"/>
        <end position="357"/>
    </location>
    <ligand>
        <name>(6S)-5,6,7,8-tetrahydrofolate</name>
        <dbReference type="ChEBI" id="CHEBI:57453"/>
    </ligand>
</feature>
<feature type="site" description="Plays an important role in substrate specificity" evidence="1">
    <location>
        <position position="228"/>
    </location>
</feature>
<feature type="modified residue" description="N6-acetyllysine" evidence="1">
    <location>
        <position position="54"/>
    </location>
</feature>
<feature type="modified residue" description="N6-(pyridoxal phosphate)lysine" evidence="1">
    <location>
        <position position="229"/>
    </location>
</feature>
<feature type="modified residue" description="N6-acetyllysine" evidence="1">
    <location>
        <position position="250"/>
    </location>
</feature>
<feature type="modified residue" description="N6-acetyllysine" evidence="1">
    <location>
        <position position="285"/>
    </location>
</feature>
<feature type="modified residue" description="N6-acetyllysine" evidence="1">
    <location>
        <position position="354"/>
    </location>
</feature>
<feature type="modified residue" description="N6-acetyllysine" evidence="1">
    <location>
        <position position="375"/>
    </location>
</feature>
<proteinExistence type="inferred from homology"/>
<comment type="function">
    <text evidence="1">Catalyzes the reversible interconversion of serine and glycine with tetrahydrofolate (THF) serving as the one-carbon carrier. This reaction serves as the major source of one-carbon groups required for the biosynthesis of purines, thymidylate, methionine, and other important biomolecules. Also exhibits THF-independent aldolase activity toward beta-hydroxyamino acids, producing glycine and aldehydes, via a retro-aldol mechanism.</text>
</comment>
<comment type="catalytic activity">
    <reaction evidence="1">
        <text>(6R)-5,10-methylene-5,6,7,8-tetrahydrofolate + glycine + H2O = (6S)-5,6,7,8-tetrahydrofolate + L-serine</text>
        <dbReference type="Rhea" id="RHEA:15481"/>
        <dbReference type="ChEBI" id="CHEBI:15377"/>
        <dbReference type="ChEBI" id="CHEBI:15636"/>
        <dbReference type="ChEBI" id="CHEBI:33384"/>
        <dbReference type="ChEBI" id="CHEBI:57305"/>
        <dbReference type="ChEBI" id="CHEBI:57453"/>
        <dbReference type="EC" id="2.1.2.1"/>
    </reaction>
</comment>
<comment type="cofactor">
    <cofactor evidence="1">
        <name>pyridoxal 5'-phosphate</name>
        <dbReference type="ChEBI" id="CHEBI:597326"/>
    </cofactor>
</comment>
<comment type="pathway">
    <text evidence="1">One-carbon metabolism; tetrahydrofolate interconversion.</text>
</comment>
<comment type="pathway">
    <text evidence="1">Amino-acid biosynthesis; glycine biosynthesis; glycine from L-serine: step 1/1.</text>
</comment>
<comment type="subunit">
    <text evidence="1">Homodimer.</text>
</comment>
<comment type="subcellular location">
    <subcellularLocation>
        <location evidence="1">Cytoplasm</location>
    </subcellularLocation>
</comment>
<comment type="similarity">
    <text evidence="1">Belongs to the SHMT family.</text>
</comment>
<organism>
    <name type="scientific">Escherichia coli O157:H7 (strain EC4115 / EHEC)</name>
    <dbReference type="NCBI Taxonomy" id="444450"/>
    <lineage>
        <taxon>Bacteria</taxon>
        <taxon>Pseudomonadati</taxon>
        <taxon>Pseudomonadota</taxon>
        <taxon>Gammaproteobacteria</taxon>
        <taxon>Enterobacterales</taxon>
        <taxon>Enterobacteriaceae</taxon>
        <taxon>Escherichia</taxon>
    </lineage>
</organism>
<dbReference type="EC" id="2.1.2.1" evidence="1"/>
<dbReference type="EMBL" id="CP001164">
    <property type="protein sequence ID" value="ACI37443.1"/>
    <property type="molecule type" value="Genomic_DNA"/>
</dbReference>
<dbReference type="RefSeq" id="WP_000919165.1">
    <property type="nucleotide sequence ID" value="NC_011353.1"/>
</dbReference>
<dbReference type="SMR" id="B5Z123"/>
<dbReference type="KEGG" id="ecf:ECH74115_3784"/>
<dbReference type="HOGENOM" id="CLU_022477_2_1_6"/>
<dbReference type="UniPathway" id="UPA00193"/>
<dbReference type="UniPathway" id="UPA00288">
    <property type="reaction ID" value="UER01023"/>
</dbReference>
<dbReference type="GO" id="GO:0005829">
    <property type="term" value="C:cytosol"/>
    <property type="evidence" value="ECO:0007669"/>
    <property type="project" value="TreeGrafter"/>
</dbReference>
<dbReference type="GO" id="GO:0004372">
    <property type="term" value="F:glycine hydroxymethyltransferase activity"/>
    <property type="evidence" value="ECO:0007669"/>
    <property type="project" value="UniProtKB-UniRule"/>
</dbReference>
<dbReference type="GO" id="GO:0030170">
    <property type="term" value="F:pyridoxal phosphate binding"/>
    <property type="evidence" value="ECO:0007669"/>
    <property type="project" value="UniProtKB-UniRule"/>
</dbReference>
<dbReference type="GO" id="GO:0019264">
    <property type="term" value="P:glycine biosynthetic process from serine"/>
    <property type="evidence" value="ECO:0007669"/>
    <property type="project" value="UniProtKB-UniRule"/>
</dbReference>
<dbReference type="GO" id="GO:0035999">
    <property type="term" value="P:tetrahydrofolate interconversion"/>
    <property type="evidence" value="ECO:0007669"/>
    <property type="project" value="UniProtKB-UniRule"/>
</dbReference>
<dbReference type="CDD" id="cd00378">
    <property type="entry name" value="SHMT"/>
    <property type="match status" value="1"/>
</dbReference>
<dbReference type="FunFam" id="3.40.640.10:FF:000001">
    <property type="entry name" value="Serine hydroxymethyltransferase"/>
    <property type="match status" value="1"/>
</dbReference>
<dbReference type="FunFam" id="3.90.1150.10:FF:000003">
    <property type="entry name" value="Serine hydroxymethyltransferase"/>
    <property type="match status" value="1"/>
</dbReference>
<dbReference type="Gene3D" id="3.90.1150.10">
    <property type="entry name" value="Aspartate Aminotransferase, domain 1"/>
    <property type="match status" value="1"/>
</dbReference>
<dbReference type="Gene3D" id="3.40.640.10">
    <property type="entry name" value="Type I PLP-dependent aspartate aminotransferase-like (Major domain)"/>
    <property type="match status" value="1"/>
</dbReference>
<dbReference type="HAMAP" id="MF_00051">
    <property type="entry name" value="SHMT"/>
    <property type="match status" value="1"/>
</dbReference>
<dbReference type="InterPro" id="IPR015424">
    <property type="entry name" value="PyrdxlP-dep_Trfase"/>
</dbReference>
<dbReference type="InterPro" id="IPR015421">
    <property type="entry name" value="PyrdxlP-dep_Trfase_major"/>
</dbReference>
<dbReference type="InterPro" id="IPR015422">
    <property type="entry name" value="PyrdxlP-dep_Trfase_small"/>
</dbReference>
<dbReference type="InterPro" id="IPR001085">
    <property type="entry name" value="Ser_HO-MeTrfase"/>
</dbReference>
<dbReference type="InterPro" id="IPR049943">
    <property type="entry name" value="Ser_HO-MeTrfase-like"/>
</dbReference>
<dbReference type="InterPro" id="IPR019798">
    <property type="entry name" value="Ser_HO-MeTrfase_PLP_BS"/>
</dbReference>
<dbReference type="InterPro" id="IPR039429">
    <property type="entry name" value="SHMT-like_dom"/>
</dbReference>
<dbReference type="NCBIfam" id="NF000586">
    <property type="entry name" value="PRK00011.1"/>
    <property type="match status" value="1"/>
</dbReference>
<dbReference type="PANTHER" id="PTHR11680">
    <property type="entry name" value="SERINE HYDROXYMETHYLTRANSFERASE"/>
    <property type="match status" value="1"/>
</dbReference>
<dbReference type="PANTHER" id="PTHR11680:SF50">
    <property type="entry name" value="SERINE HYDROXYMETHYLTRANSFERASE"/>
    <property type="match status" value="1"/>
</dbReference>
<dbReference type="Pfam" id="PF00464">
    <property type="entry name" value="SHMT"/>
    <property type="match status" value="1"/>
</dbReference>
<dbReference type="PIRSF" id="PIRSF000412">
    <property type="entry name" value="SHMT"/>
    <property type="match status" value="1"/>
</dbReference>
<dbReference type="SUPFAM" id="SSF53383">
    <property type="entry name" value="PLP-dependent transferases"/>
    <property type="match status" value="1"/>
</dbReference>
<dbReference type="PROSITE" id="PS00096">
    <property type="entry name" value="SHMT"/>
    <property type="match status" value="1"/>
</dbReference>
<sequence>MLKREMNIADYDAELWQAMEQEKVRQEEHIELIASENYTSPRVMQAQGSQLTNKYAEGYPGKRYYGGCEYVDIVEQLAIDRAKELFGADYANVQPHSGSQANFAVYTALLEPGDTVLGMNLAHGGHLTHGSPVNFSGKLYNIVPYGIDATGHIDYADLEKQAKEHKPKMIIGGFSAYSGVVDWAKMREIADSIGAYLFVDMAHVAGLVAAGVYPNPVPHAHVVTTTTHKTLAGPRGGLILAKGGSEELYKKLNSAVFPGGQGGPLMHVIAGKAVALKEAMEPEFKTYQQQVAKNAKAMVEVFLERGYKVVSGGTDNHLFLVDLVDKNLTGKEADAALGRANITVNKNSVPNDPKSPFVTSGIRVGTPAITRRGFKEVEAKELAGWMCDVLDSINDEAVIERIKGKVLDICARYPVYA</sequence>